<comment type="function">
    <text evidence="1">Required for the induction the katG gene for catalase. Involved in the response to hydrogen peroxide (By similarity).</text>
</comment>
<comment type="similarity">
    <text evidence="3">Belongs to the LysR transcriptional regulatory family.</text>
</comment>
<protein>
    <recommendedName>
        <fullName>Probable hydrogen peroxide-inducible genes activator</fullName>
    </recommendedName>
</protein>
<sequence>MSDKSYQPTIAGLRAFVAVVEKGHFSAAASFLGVRQSTLSQALAALESGLGVQLIERSTRRVFVTTQGRHLLPRAQAAIEAMDAFTAAAAGESDPLRGGMRLGLIPTVAPYVLPTMLTGLTHRLPTLTLRVVEDQTEHLLTALREGALDAAMIALPVETAGIAEIPIYDEDFVLALPPGHPLSGKRRVPTTALAQLPLLLLDEGHCLRDQTLDICRKSGVQAELANTRAASLATAVQCVTGGLGVTLLPQSAAPVESVRSKLGLAQFAAPCPGRRIGLAFRSASGRSASYRQIAKIIGELISTEHHVRLVA</sequence>
<reference key="1">
    <citation type="journal article" date="1994" name="J. Exp. Med.">
        <title>Purification, characterization, gene sequence, and significance of a bacterioferritin from Mycobacterium leprae.</title>
        <authorList>
            <person name="Pessolani M.C.V."/>
            <person name="Smith D.R."/>
            <person name="Rivoire B."/>
            <person name="McCormick J."/>
            <person name="Hefta S.A."/>
            <person name="Cole S.T."/>
            <person name="Brennan P.J."/>
        </authorList>
    </citation>
    <scope>NUCLEOTIDE SEQUENCE [GENOMIC DNA]</scope>
</reference>
<reference key="2">
    <citation type="journal article" date="2001" name="Nature">
        <title>Massive gene decay in the leprosy bacillus.</title>
        <authorList>
            <person name="Cole S.T."/>
            <person name="Eiglmeier K."/>
            <person name="Parkhill J."/>
            <person name="James K.D."/>
            <person name="Thomson N.R."/>
            <person name="Wheeler P.R."/>
            <person name="Honore N."/>
            <person name="Garnier T."/>
            <person name="Churcher C.M."/>
            <person name="Harris D.E."/>
            <person name="Mungall K.L."/>
            <person name="Basham D."/>
            <person name="Brown D."/>
            <person name="Chillingworth T."/>
            <person name="Connor R."/>
            <person name="Davies R.M."/>
            <person name="Devlin K."/>
            <person name="Duthoy S."/>
            <person name="Feltwell T."/>
            <person name="Fraser A."/>
            <person name="Hamlin N."/>
            <person name="Holroyd S."/>
            <person name="Hornsby T."/>
            <person name="Jagels K."/>
            <person name="Lacroix C."/>
            <person name="Maclean J."/>
            <person name="Moule S."/>
            <person name="Murphy L.D."/>
            <person name="Oliver K."/>
            <person name="Quail M.A."/>
            <person name="Rajandream M.A."/>
            <person name="Rutherford K.M."/>
            <person name="Rutter S."/>
            <person name="Seeger K."/>
            <person name="Simon S."/>
            <person name="Simmonds M."/>
            <person name="Skelton J."/>
            <person name="Squares R."/>
            <person name="Squares S."/>
            <person name="Stevens K."/>
            <person name="Taylor K."/>
            <person name="Whitehead S."/>
            <person name="Woodward J.R."/>
            <person name="Barrell B.G."/>
        </authorList>
    </citation>
    <scope>NUCLEOTIDE SEQUENCE [LARGE SCALE GENOMIC DNA]</scope>
    <source>
        <strain>TN</strain>
    </source>
</reference>
<name>OXYR_MYCLE</name>
<gene>
    <name type="primary">oxyR</name>
    <name type="ordered locus">ML2041</name>
</gene>
<keyword id="KW-0010">Activator</keyword>
<keyword id="KW-0238">DNA-binding</keyword>
<keyword id="KW-1185">Reference proteome</keyword>
<keyword id="KW-0804">Transcription</keyword>
<keyword id="KW-0805">Transcription regulation</keyword>
<organism>
    <name type="scientific">Mycobacterium leprae (strain TN)</name>
    <dbReference type="NCBI Taxonomy" id="272631"/>
    <lineage>
        <taxon>Bacteria</taxon>
        <taxon>Bacillati</taxon>
        <taxon>Actinomycetota</taxon>
        <taxon>Actinomycetes</taxon>
        <taxon>Mycobacteriales</taxon>
        <taxon>Mycobacteriaceae</taxon>
        <taxon>Mycobacterium</taxon>
    </lineage>
</organism>
<feature type="chain" id="PRO_0000105735" description="Probable hydrogen peroxide-inducible genes activator">
    <location>
        <begin position="1"/>
        <end position="311"/>
    </location>
</feature>
<feature type="domain" description="HTH lysR-type" evidence="2">
    <location>
        <begin position="8"/>
        <end position="65"/>
    </location>
</feature>
<feature type="DNA-binding region" description="H-T-H motif" evidence="2">
    <location>
        <begin position="25"/>
        <end position="44"/>
    </location>
</feature>
<proteinExistence type="inferred from homology"/>
<accession>P52678</accession>
<dbReference type="EMBL" id="L01095">
    <property type="status" value="NOT_ANNOTATED_CDS"/>
    <property type="molecule type" value="Genomic_DNA"/>
</dbReference>
<dbReference type="EMBL" id="AL583924">
    <property type="protein sequence ID" value="CAC30996.1"/>
    <property type="molecule type" value="Genomic_DNA"/>
</dbReference>
<dbReference type="PIR" id="D87164">
    <property type="entry name" value="D87164"/>
</dbReference>
<dbReference type="RefSeq" id="NP_302364.1">
    <property type="nucleotide sequence ID" value="NC_002677.1"/>
</dbReference>
<dbReference type="RefSeq" id="WP_010908684.1">
    <property type="nucleotide sequence ID" value="NC_002677.1"/>
</dbReference>
<dbReference type="SMR" id="P52678"/>
<dbReference type="STRING" id="272631.gene:17575893"/>
<dbReference type="KEGG" id="mle:ML2041"/>
<dbReference type="PATRIC" id="fig|272631.5.peg.3846"/>
<dbReference type="Leproma" id="ML2041"/>
<dbReference type="eggNOG" id="COG0583">
    <property type="taxonomic scope" value="Bacteria"/>
</dbReference>
<dbReference type="HOGENOM" id="CLU_039613_6_4_11"/>
<dbReference type="OrthoDB" id="9775392at2"/>
<dbReference type="Proteomes" id="UP000000806">
    <property type="component" value="Chromosome"/>
</dbReference>
<dbReference type="GO" id="GO:0032993">
    <property type="term" value="C:protein-DNA complex"/>
    <property type="evidence" value="ECO:0007669"/>
    <property type="project" value="TreeGrafter"/>
</dbReference>
<dbReference type="GO" id="GO:0003677">
    <property type="term" value="F:DNA binding"/>
    <property type="evidence" value="ECO:0007669"/>
    <property type="project" value="UniProtKB-KW"/>
</dbReference>
<dbReference type="GO" id="GO:0003700">
    <property type="term" value="F:DNA-binding transcription factor activity"/>
    <property type="evidence" value="ECO:0007669"/>
    <property type="project" value="InterPro"/>
</dbReference>
<dbReference type="CDD" id="cd08411">
    <property type="entry name" value="PBP2_OxyR"/>
    <property type="match status" value="1"/>
</dbReference>
<dbReference type="FunFam" id="1.10.10.10:FF:000001">
    <property type="entry name" value="LysR family transcriptional regulator"/>
    <property type="match status" value="1"/>
</dbReference>
<dbReference type="Gene3D" id="3.40.190.10">
    <property type="entry name" value="Periplasmic binding protein-like II"/>
    <property type="match status" value="2"/>
</dbReference>
<dbReference type="Gene3D" id="1.10.10.10">
    <property type="entry name" value="Winged helix-like DNA-binding domain superfamily/Winged helix DNA-binding domain"/>
    <property type="match status" value="1"/>
</dbReference>
<dbReference type="InterPro" id="IPR005119">
    <property type="entry name" value="LysR_subst-bd"/>
</dbReference>
<dbReference type="InterPro" id="IPR000847">
    <property type="entry name" value="Tscrpt_reg_HTH_LysR"/>
</dbReference>
<dbReference type="InterPro" id="IPR036388">
    <property type="entry name" value="WH-like_DNA-bd_sf"/>
</dbReference>
<dbReference type="InterPro" id="IPR036390">
    <property type="entry name" value="WH_DNA-bd_sf"/>
</dbReference>
<dbReference type="PANTHER" id="PTHR30346:SF26">
    <property type="entry name" value="HYDROGEN PEROXIDE-INDUCIBLE GENES ACTIVATOR"/>
    <property type="match status" value="1"/>
</dbReference>
<dbReference type="PANTHER" id="PTHR30346">
    <property type="entry name" value="TRANSCRIPTIONAL DUAL REGULATOR HCAR-RELATED"/>
    <property type="match status" value="1"/>
</dbReference>
<dbReference type="Pfam" id="PF00126">
    <property type="entry name" value="HTH_1"/>
    <property type="match status" value="1"/>
</dbReference>
<dbReference type="Pfam" id="PF03466">
    <property type="entry name" value="LysR_substrate"/>
    <property type="match status" value="1"/>
</dbReference>
<dbReference type="PRINTS" id="PR00039">
    <property type="entry name" value="HTHLYSR"/>
</dbReference>
<dbReference type="SUPFAM" id="SSF53850">
    <property type="entry name" value="Periplasmic binding protein-like II"/>
    <property type="match status" value="1"/>
</dbReference>
<dbReference type="SUPFAM" id="SSF46785">
    <property type="entry name" value="Winged helix' DNA-binding domain"/>
    <property type="match status" value="1"/>
</dbReference>
<dbReference type="PROSITE" id="PS50931">
    <property type="entry name" value="HTH_LYSR"/>
    <property type="match status" value="1"/>
</dbReference>
<evidence type="ECO:0000250" key="1"/>
<evidence type="ECO:0000255" key="2">
    <source>
        <dbReference type="PROSITE-ProRule" id="PRU00253"/>
    </source>
</evidence>
<evidence type="ECO:0000305" key="3"/>